<accession>Q1A3Q9</accession>
<sequence>MLCLPVFIILLLLASPAAPKSLETRIQNDLIRAGLTDADLKTEKGFLSGLLNVAGSVCCKVDTSCCSN</sequence>
<organism>
    <name type="scientific">Conus litteratus</name>
    <name type="common">Lettered cone</name>
    <dbReference type="NCBI Taxonomy" id="89445"/>
    <lineage>
        <taxon>Eukaryota</taxon>
        <taxon>Metazoa</taxon>
        <taxon>Spiralia</taxon>
        <taxon>Lophotrochozoa</taxon>
        <taxon>Mollusca</taxon>
        <taxon>Gastropoda</taxon>
        <taxon>Caenogastropoda</taxon>
        <taxon>Neogastropoda</taxon>
        <taxon>Conoidea</taxon>
        <taxon>Conidae</taxon>
        <taxon>Conus</taxon>
        <taxon>Elisaconus</taxon>
    </lineage>
</organism>
<proteinExistence type="inferred from homology"/>
<dbReference type="EMBL" id="DQ345355">
    <property type="protein sequence ID" value="ABC70191.1"/>
    <property type="molecule type" value="mRNA"/>
</dbReference>
<dbReference type="ConoServer" id="1142">
    <property type="toxin name" value="Lt5b precursor"/>
</dbReference>
<dbReference type="GO" id="GO:0005576">
    <property type="term" value="C:extracellular region"/>
    <property type="evidence" value="ECO:0007669"/>
    <property type="project" value="UniProtKB-SubCell"/>
</dbReference>
<dbReference type="GO" id="GO:0090729">
    <property type="term" value="F:toxin activity"/>
    <property type="evidence" value="ECO:0007669"/>
    <property type="project" value="UniProtKB-KW"/>
</dbReference>
<dbReference type="InterPro" id="IPR031565">
    <property type="entry name" value="T-conotoxin"/>
</dbReference>
<dbReference type="Pfam" id="PF16981">
    <property type="entry name" value="Chi-conotoxin"/>
    <property type="match status" value="1"/>
</dbReference>
<comment type="subcellular location">
    <subcellularLocation>
        <location evidence="5">Secreted</location>
    </subcellularLocation>
</comment>
<comment type="tissue specificity">
    <text evidence="5">Expressed by the venom duct.</text>
</comment>
<comment type="domain">
    <text evidence="4">The cysteine framework is V (CC-CC).</text>
</comment>
<comment type="PTM">
    <text evidence="4">Contains 2 disulfide bonds that can be either 'C1-C3, C2-C4' or 'C1-C4, C2-C3', since these disulfide connectivities have been observed for conotoxins with cysteine framework V (for examples, see AC P0DQQ7 and AC P81755).</text>
</comment>
<comment type="similarity">
    <text evidence="4">Belongs to the conotoxin T superfamily.</text>
</comment>
<evidence type="ECO:0000250" key="1"/>
<evidence type="ECO:0000255" key="2"/>
<evidence type="ECO:0000303" key="3">
    <source>
    </source>
</evidence>
<evidence type="ECO:0000305" key="4"/>
<evidence type="ECO:0000305" key="5">
    <source>
    </source>
</evidence>
<evidence type="ECO:0000312" key="6">
    <source>
        <dbReference type="EMBL" id="ABC70191.1"/>
    </source>
</evidence>
<name>CT52_CONLT</name>
<reference key="1">
    <citation type="journal article" date="2006" name="Genomics">
        <title>Diversity and evolution of conotoxins based on gene expression profiling of Conus litteratus.</title>
        <authorList>
            <person name="Pi C."/>
            <person name="Liu J."/>
            <person name="Peng C."/>
            <person name="Liu Y."/>
            <person name="Jiang X."/>
            <person name="Zhao Y."/>
            <person name="Tang S."/>
            <person name="Wang L."/>
            <person name="Dong M."/>
            <person name="Chen S."/>
            <person name="Xu A."/>
        </authorList>
    </citation>
    <scope>NUCLEOTIDE SEQUENCE [MRNA]</scope>
    <source>
        <tissue>Venom duct</tissue>
    </source>
</reference>
<keyword id="KW-1015">Disulfide bond</keyword>
<keyword id="KW-0964">Secreted</keyword>
<keyword id="KW-0732">Signal</keyword>
<keyword id="KW-0800">Toxin</keyword>
<protein>
    <recommendedName>
        <fullName evidence="3">Conotoxin Lt5.2</fullName>
    </recommendedName>
    <alternativeName>
        <fullName evidence="6">Lt5b</fullName>
    </alternativeName>
</protein>
<feature type="signal peptide" evidence="2">
    <location>
        <begin position="1"/>
        <end position="19"/>
    </location>
</feature>
<feature type="propeptide" id="PRO_0000315425" evidence="1">
    <location>
        <begin position="20"/>
        <end position="54"/>
    </location>
</feature>
<feature type="peptide" id="PRO_0000315426" description="Conotoxin Lt5.2">
    <location>
        <begin position="55"/>
        <end position="68"/>
    </location>
</feature>